<gene>
    <name type="ordered locus">Psyr_4114</name>
</gene>
<evidence type="ECO:0000255" key="1">
    <source>
        <dbReference type="HAMAP-Rule" id="MF_00048"/>
    </source>
</evidence>
<sequence length="123" mass="14032">MQRSTRQQAGREAEAFALQFLQRQGLRLIEQNWLCKRGELDLVMLDGDTVVFVEVRYRRHSGWGGAMESVDFRKQEKLVTAAQLFLQHATAWANHPCRFDVIAIEGEPGNAAPLNWIKSAFDS</sequence>
<feature type="chain" id="PRO_0000336237" description="UPF0102 protein Psyr_4114">
    <location>
        <begin position="1"/>
        <end position="123"/>
    </location>
</feature>
<name>Y4114_PSEU2</name>
<proteinExistence type="inferred from homology"/>
<comment type="similarity">
    <text evidence="1">Belongs to the UPF0102 family.</text>
</comment>
<accession>Q4ZNX8</accession>
<reference key="1">
    <citation type="journal article" date="2005" name="Proc. Natl. Acad. Sci. U.S.A.">
        <title>Comparison of the complete genome sequences of Pseudomonas syringae pv. syringae B728a and pv. tomato DC3000.</title>
        <authorList>
            <person name="Feil H."/>
            <person name="Feil W.S."/>
            <person name="Chain P."/>
            <person name="Larimer F."/>
            <person name="Dibartolo G."/>
            <person name="Copeland A."/>
            <person name="Lykidis A."/>
            <person name="Trong S."/>
            <person name="Nolan M."/>
            <person name="Goltsman E."/>
            <person name="Thiel J."/>
            <person name="Malfatti S."/>
            <person name="Loper J.E."/>
            <person name="Lapidus A."/>
            <person name="Detter J.C."/>
            <person name="Land M."/>
            <person name="Richardson P.M."/>
            <person name="Kyrpides N.C."/>
            <person name="Ivanova N."/>
            <person name="Lindow S.E."/>
        </authorList>
    </citation>
    <scope>NUCLEOTIDE SEQUENCE [LARGE SCALE GENOMIC DNA]</scope>
    <source>
        <strain>B728a</strain>
    </source>
</reference>
<dbReference type="EMBL" id="CP000075">
    <property type="protein sequence ID" value="AAY39144.1"/>
    <property type="molecule type" value="Genomic_DNA"/>
</dbReference>
<dbReference type="RefSeq" id="YP_237182.1">
    <property type="nucleotide sequence ID" value="NC_007005.1"/>
</dbReference>
<dbReference type="SMR" id="Q4ZNX8"/>
<dbReference type="STRING" id="205918.Psyr_4114"/>
<dbReference type="KEGG" id="psb:Psyr_4114"/>
<dbReference type="PATRIC" id="fig|205918.7.peg.4232"/>
<dbReference type="eggNOG" id="COG0792">
    <property type="taxonomic scope" value="Bacteria"/>
</dbReference>
<dbReference type="HOGENOM" id="CLU_115353_1_0_6"/>
<dbReference type="OrthoDB" id="9794876at2"/>
<dbReference type="Proteomes" id="UP000000426">
    <property type="component" value="Chromosome"/>
</dbReference>
<dbReference type="GO" id="GO:0003676">
    <property type="term" value="F:nucleic acid binding"/>
    <property type="evidence" value="ECO:0007669"/>
    <property type="project" value="InterPro"/>
</dbReference>
<dbReference type="CDD" id="cd20736">
    <property type="entry name" value="PoNe_Nuclease"/>
    <property type="match status" value="1"/>
</dbReference>
<dbReference type="Gene3D" id="3.40.1350.10">
    <property type="match status" value="1"/>
</dbReference>
<dbReference type="HAMAP" id="MF_00048">
    <property type="entry name" value="UPF0102"/>
    <property type="match status" value="1"/>
</dbReference>
<dbReference type="InterPro" id="IPR011335">
    <property type="entry name" value="Restrct_endonuc-II-like"/>
</dbReference>
<dbReference type="InterPro" id="IPR011856">
    <property type="entry name" value="tRNA_endonuc-like_dom_sf"/>
</dbReference>
<dbReference type="InterPro" id="IPR003509">
    <property type="entry name" value="UPF0102_YraN-like"/>
</dbReference>
<dbReference type="NCBIfam" id="NF009150">
    <property type="entry name" value="PRK12497.1-3"/>
    <property type="match status" value="1"/>
</dbReference>
<dbReference type="NCBIfam" id="TIGR00252">
    <property type="entry name" value="YraN family protein"/>
    <property type="match status" value="1"/>
</dbReference>
<dbReference type="PANTHER" id="PTHR34039">
    <property type="entry name" value="UPF0102 PROTEIN YRAN"/>
    <property type="match status" value="1"/>
</dbReference>
<dbReference type="PANTHER" id="PTHR34039:SF1">
    <property type="entry name" value="UPF0102 PROTEIN YRAN"/>
    <property type="match status" value="1"/>
</dbReference>
<dbReference type="Pfam" id="PF02021">
    <property type="entry name" value="UPF0102"/>
    <property type="match status" value="1"/>
</dbReference>
<dbReference type="SUPFAM" id="SSF52980">
    <property type="entry name" value="Restriction endonuclease-like"/>
    <property type="match status" value="1"/>
</dbReference>
<protein>
    <recommendedName>
        <fullName evidence="1">UPF0102 protein Psyr_4114</fullName>
    </recommendedName>
</protein>
<organism>
    <name type="scientific">Pseudomonas syringae pv. syringae (strain B728a)</name>
    <dbReference type="NCBI Taxonomy" id="205918"/>
    <lineage>
        <taxon>Bacteria</taxon>
        <taxon>Pseudomonadati</taxon>
        <taxon>Pseudomonadota</taxon>
        <taxon>Gammaproteobacteria</taxon>
        <taxon>Pseudomonadales</taxon>
        <taxon>Pseudomonadaceae</taxon>
        <taxon>Pseudomonas</taxon>
        <taxon>Pseudomonas syringae</taxon>
    </lineage>
</organism>